<evidence type="ECO:0000255" key="1"/>
<evidence type="ECO:0000255" key="2">
    <source>
        <dbReference type="HAMAP-Rule" id="MF_01260"/>
    </source>
</evidence>
<keyword id="KW-0093">Biotin biosynthesis</keyword>
<keyword id="KW-0963">Cytoplasm</keyword>
<keyword id="KW-0378">Hydrolase</keyword>
<keyword id="KW-1185">Reference proteome</keyword>
<keyword id="KW-0719">Serine esterase</keyword>
<feature type="chain" id="PRO_1000067269" description="Pimeloyl-[acyl-carrier protein] methyl ester esterase">
    <location>
        <begin position="1"/>
        <end position="259"/>
    </location>
</feature>
<feature type="domain" description="AB hydrolase-1" evidence="1">
    <location>
        <begin position="15"/>
        <end position="242"/>
    </location>
</feature>
<feature type="active site" description="Nucleophile" evidence="2">
    <location>
        <position position="82"/>
    </location>
</feature>
<feature type="active site" evidence="2">
    <location>
        <position position="207"/>
    </location>
</feature>
<feature type="active site" evidence="2">
    <location>
        <position position="235"/>
    </location>
</feature>
<feature type="binding site" evidence="2">
    <location>
        <position position="22"/>
    </location>
    <ligand>
        <name>substrate</name>
    </ligand>
</feature>
<feature type="binding site" evidence="2">
    <location>
        <begin position="82"/>
        <end position="83"/>
    </location>
    <ligand>
        <name>substrate</name>
    </ligand>
</feature>
<feature type="binding site" evidence="2">
    <location>
        <begin position="143"/>
        <end position="147"/>
    </location>
    <ligand>
        <name>substrate</name>
    </ligand>
</feature>
<feature type="binding site" evidence="2">
    <location>
        <position position="235"/>
    </location>
    <ligand>
        <name>substrate</name>
    </ligand>
</feature>
<sequence length="259" mass="28430">MNDIWWQTTGEGNCHLVLLHGWGLNAEVWRCISQELSSHFTLHLVDLPGYGRSQGYGALTLDEMARLVASRAPECAIWLGWSLGGLVASQVALSEPSRVDALVTVASSPCFQAGADWPGIKPEVLSGFQRQLSEDFQRTVERFLALQTLGTETARQDARVLKSIVLAQPMPGADVLNGGLEILKTADLREALTAWQGPFLRLYGRLDGLVLRKVAALLDARFPDSESQVFEKAAHAPFISHPREFCDALLALKARLANR</sequence>
<organism>
    <name type="scientific">Cronobacter sakazakii (strain ATCC BAA-894)</name>
    <name type="common">Enterobacter sakazakii</name>
    <dbReference type="NCBI Taxonomy" id="290339"/>
    <lineage>
        <taxon>Bacteria</taxon>
        <taxon>Pseudomonadati</taxon>
        <taxon>Pseudomonadota</taxon>
        <taxon>Gammaproteobacteria</taxon>
        <taxon>Enterobacterales</taxon>
        <taxon>Enterobacteriaceae</taxon>
        <taxon>Cronobacter</taxon>
    </lineage>
</organism>
<comment type="function">
    <text evidence="2">The physiological role of BioH is to remove the methyl group introduced by BioC when the pimeloyl moiety is complete. It allows to synthesize pimeloyl-ACP via the fatty acid synthetic pathway through the hydrolysis of the ester bonds of pimeloyl-ACP esters.</text>
</comment>
<comment type="catalytic activity">
    <reaction evidence="2">
        <text>6-carboxyhexanoyl-[ACP] methyl ester + H2O = 6-carboxyhexanoyl-[ACP] + methanol + H(+)</text>
        <dbReference type="Rhea" id="RHEA:42700"/>
        <dbReference type="Rhea" id="RHEA-COMP:9955"/>
        <dbReference type="Rhea" id="RHEA-COMP:10186"/>
        <dbReference type="ChEBI" id="CHEBI:15377"/>
        <dbReference type="ChEBI" id="CHEBI:15378"/>
        <dbReference type="ChEBI" id="CHEBI:17790"/>
        <dbReference type="ChEBI" id="CHEBI:78846"/>
        <dbReference type="ChEBI" id="CHEBI:82735"/>
        <dbReference type="EC" id="3.1.1.85"/>
    </reaction>
</comment>
<comment type="pathway">
    <text evidence="2">Cofactor biosynthesis; biotin biosynthesis.</text>
</comment>
<comment type="subunit">
    <text evidence="2">Monomer.</text>
</comment>
<comment type="subcellular location">
    <subcellularLocation>
        <location evidence="2">Cytoplasm</location>
    </subcellularLocation>
</comment>
<comment type="similarity">
    <text evidence="2">Belongs to the AB hydrolase superfamily. Carboxylesterase BioH family.</text>
</comment>
<accession>A7MGD2</accession>
<proteinExistence type="inferred from homology"/>
<reference key="1">
    <citation type="journal article" date="2010" name="PLoS ONE">
        <title>Genome sequence of Cronobacter sakazakii BAA-894 and comparative genomic hybridization analysis with other Cronobacter species.</title>
        <authorList>
            <person name="Kucerova E."/>
            <person name="Clifton S.W."/>
            <person name="Xia X.Q."/>
            <person name="Long F."/>
            <person name="Porwollik S."/>
            <person name="Fulton L."/>
            <person name="Fronick C."/>
            <person name="Minx P."/>
            <person name="Kyung K."/>
            <person name="Warren W."/>
            <person name="Fulton R."/>
            <person name="Feng D."/>
            <person name="Wollam A."/>
            <person name="Shah N."/>
            <person name="Bhonagiri V."/>
            <person name="Nash W.E."/>
            <person name="Hallsworth-Pepin K."/>
            <person name="Wilson R.K."/>
            <person name="McClelland M."/>
            <person name="Forsythe S.J."/>
        </authorList>
    </citation>
    <scope>NUCLEOTIDE SEQUENCE [LARGE SCALE GENOMIC DNA]</scope>
    <source>
        <strain>ATCC BAA-894</strain>
    </source>
</reference>
<gene>
    <name evidence="2" type="primary">bioH</name>
    <name type="ordered locus">ESA_04326</name>
</gene>
<protein>
    <recommendedName>
        <fullName evidence="2">Pimeloyl-[acyl-carrier protein] methyl ester esterase</fullName>
        <ecNumber evidence="2">3.1.1.85</ecNumber>
    </recommendedName>
    <alternativeName>
        <fullName evidence="2">Biotin synthesis protein BioH</fullName>
    </alternativeName>
    <alternativeName>
        <fullName evidence="2">Carboxylesterase BioH</fullName>
    </alternativeName>
</protein>
<name>BIOH_CROS8</name>
<dbReference type="EC" id="3.1.1.85" evidence="2"/>
<dbReference type="EMBL" id="CP000783">
    <property type="protein sequence ID" value="ABU79505.1"/>
    <property type="molecule type" value="Genomic_DNA"/>
</dbReference>
<dbReference type="RefSeq" id="WP_012126379.1">
    <property type="nucleotide sequence ID" value="NC_009778.1"/>
</dbReference>
<dbReference type="SMR" id="A7MGD2"/>
<dbReference type="ESTHER" id="ents8-bioh">
    <property type="family name" value="BioH"/>
</dbReference>
<dbReference type="KEGG" id="esa:ESA_04326"/>
<dbReference type="PATRIC" id="fig|290339.8.peg.3853"/>
<dbReference type="HOGENOM" id="CLU_020336_12_2_6"/>
<dbReference type="UniPathway" id="UPA00078"/>
<dbReference type="Proteomes" id="UP000000260">
    <property type="component" value="Chromosome"/>
</dbReference>
<dbReference type="GO" id="GO:0005737">
    <property type="term" value="C:cytoplasm"/>
    <property type="evidence" value="ECO:0007669"/>
    <property type="project" value="UniProtKB-SubCell"/>
</dbReference>
<dbReference type="GO" id="GO:0090499">
    <property type="term" value="F:pimelyl-[acyl-carrier protein] methyl ester esterase activity"/>
    <property type="evidence" value="ECO:0007669"/>
    <property type="project" value="UniProtKB-EC"/>
</dbReference>
<dbReference type="GO" id="GO:0009102">
    <property type="term" value="P:biotin biosynthetic process"/>
    <property type="evidence" value="ECO:0007669"/>
    <property type="project" value="UniProtKB-UniRule"/>
</dbReference>
<dbReference type="FunFam" id="3.40.50.1820:FF:000045">
    <property type="entry name" value="Pimeloyl-[acyl-carrier protein] methyl ester esterase"/>
    <property type="match status" value="1"/>
</dbReference>
<dbReference type="Gene3D" id="3.40.50.1820">
    <property type="entry name" value="alpha/beta hydrolase"/>
    <property type="match status" value="1"/>
</dbReference>
<dbReference type="HAMAP" id="MF_01260">
    <property type="entry name" value="Carboxylester"/>
    <property type="match status" value="1"/>
</dbReference>
<dbReference type="InterPro" id="IPR000073">
    <property type="entry name" value="AB_hydrolase_1"/>
</dbReference>
<dbReference type="InterPro" id="IPR029058">
    <property type="entry name" value="AB_hydrolase_fold"/>
</dbReference>
<dbReference type="InterPro" id="IPR010076">
    <property type="entry name" value="BioH"/>
</dbReference>
<dbReference type="InterPro" id="IPR050228">
    <property type="entry name" value="Carboxylesterase_BioH"/>
</dbReference>
<dbReference type="NCBIfam" id="TIGR01738">
    <property type="entry name" value="bioH"/>
    <property type="match status" value="1"/>
</dbReference>
<dbReference type="NCBIfam" id="NF007674">
    <property type="entry name" value="PRK10349.1"/>
    <property type="match status" value="1"/>
</dbReference>
<dbReference type="PANTHER" id="PTHR43194">
    <property type="entry name" value="HYDROLASE ALPHA/BETA FOLD FAMILY"/>
    <property type="match status" value="1"/>
</dbReference>
<dbReference type="PANTHER" id="PTHR43194:SF5">
    <property type="entry name" value="PIMELOYL-[ACYL-CARRIER PROTEIN] METHYL ESTER ESTERASE"/>
    <property type="match status" value="1"/>
</dbReference>
<dbReference type="Pfam" id="PF00561">
    <property type="entry name" value="Abhydrolase_1"/>
    <property type="match status" value="1"/>
</dbReference>
<dbReference type="SUPFAM" id="SSF53474">
    <property type="entry name" value="alpha/beta-Hydrolases"/>
    <property type="match status" value="1"/>
</dbReference>